<comment type="function">
    <text evidence="5">Involved in the transport of maltose and maltodextrins. Does not act as a receptor for phages.</text>
</comment>
<comment type="catalytic activity">
    <reaction evidence="1">
        <text>beta-maltose(in) = beta-maltose(out)</text>
        <dbReference type="Rhea" id="RHEA:29731"/>
        <dbReference type="ChEBI" id="CHEBI:18147"/>
    </reaction>
</comment>
<comment type="subunit">
    <text evidence="1 2">Homotrimer formed of three 18-stranded antiparallel beta-barrels, containing three independent channels.</text>
</comment>
<comment type="subcellular location">
    <subcellularLocation>
        <location evidence="1">Cell outer membrane</location>
        <topology evidence="1">Multi-pass membrane protein</topology>
    </subcellularLocation>
</comment>
<comment type="induction">
    <text evidence="1 4">By maltose.</text>
</comment>
<comment type="similarity">
    <text evidence="1 4">Belongs to the porin LamB (TC 1.B.3) family.</text>
</comment>
<gene>
    <name evidence="1" type="primary">lamB</name>
    <name evidence="3" type="synonym">malL</name>
    <name type="ordered locus">STM4231</name>
</gene>
<organism>
    <name type="scientific">Salmonella typhimurium (strain LT2 / SGSC1412 / ATCC 700720)</name>
    <dbReference type="NCBI Taxonomy" id="99287"/>
    <lineage>
        <taxon>Bacteria</taxon>
        <taxon>Pseudomonadati</taxon>
        <taxon>Pseudomonadota</taxon>
        <taxon>Gammaproteobacteria</taxon>
        <taxon>Enterobacterales</taxon>
        <taxon>Enterobacteriaceae</taxon>
        <taxon>Salmonella</taxon>
    </lineage>
</organism>
<protein>
    <recommendedName>
        <fullName evidence="1">Maltoporin</fullName>
    </recommendedName>
    <alternativeName>
        <fullName evidence="1">Maltose-inducible porin</fullName>
    </alternativeName>
</protein>
<dbReference type="EMBL" id="X54292">
    <property type="protein sequence ID" value="CAA38187.1"/>
    <property type="molecule type" value="Genomic_DNA"/>
</dbReference>
<dbReference type="EMBL" id="AE006468">
    <property type="protein sequence ID" value="AAL23055.1"/>
    <property type="molecule type" value="Genomic_DNA"/>
</dbReference>
<dbReference type="PIR" id="A60177">
    <property type="entry name" value="A60177"/>
</dbReference>
<dbReference type="RefSeq" id="NP_463096.1">
    <property type="nucleotide sequence ID" value="NC_003197.2"/>
</dbReference>
<dbReference type="RefSeq" id="WP_000973645.1">
    <property type="nucleotide sequence ID" value="NC_003197.2"/>
</dbReference>
<dbReference type="PDB" id="1MPR">
    <property type="method" value="X-ray"/>
    <property type="resolution" value="2.80 A"/>
    <property type="chains" value="A/B/C=26-452"/>
</dbReference>
<dbReference type="PDB" id="2MPR">
    <property type="method" value="X-ray"/>
    <property type="resolution" value="2.40 A"/>
    <property type="chains" value="A/B/C=26-452"/>
</dbReference>
<dbReference type="PDBsum" id="1MPR"/>
<dbReference type="PDBsum" id="2MPR"/>
<dbReference type="SMR" id="P26466"/>
<dbReference type="STRING" id="99287.STM4231"/>
<dbReference type="DrugBank" id="DB02379">
    <property type="generic name" value="Beta-D-Glucose"/>
</dbReference>
<dbReference type="PaxDb" id="99287-STM4231"/>
<dbReference type="GeneID" id="1255757"/>
<dbReference type="KEGG" id="stm:STM4231"/>
<dbReference type="PATRIC" id="fig|99287.12.peg.4451"/>
<dbReference type="HOGENOM" id="CLU_032473_4_1_6"/>
<dbReference type="OMA" id="VSQQNDW"/>
<dbReference type="PhylomeDB" id="P26466"/>
<dbReference type="BioCyc" id="SENT99287:STM4231-MONOMER"/>
<dbReference type="EvolutionaryTrace" id="P26466"/>
<dbReference type="Proteomes" id="UP000001014">
    <property type="component" value="Chromosome"/>
</dbReference>
<dbReference type="GO" id="GO:0009279">
    <property type="term" value="C:cell outer membrane"/>
    <property type="evidence" value="ECO:0000318"/>
    <property type="project" value="GO_Central"/>
</dbReference>
<dbReference type="GO" id="GO:0046930">
    <property type="term" value="C:pore complex"/>
    <property type="evidence" value="ECO:0007669"/>
    <property type="project" value="UniProtKB-KW"/>
</dbReference>
<dbReference type="GO" id="GO:0015144">
    <property type="term" value="F:carbohydrate transmembrane transporter activity"/>
    <property type="evidence" value="ECO:0000318"/>
    <property type="project" value="GO_Central"/>
</dbReference>
<dbReference type="GO" id="GO:0042958">
    <property type="term" value="F:maltodextrin transmembrane transporter activity"/>
    <property type="evidence" value="ECO:0007669"/>
    <property type="project" value="InterPro"/>
</dbReference>
<dbReference type="GO" id="GO:0015481">
    <property type="term" value="F:maltose transporting porin activity"/>
    <property type="evidence" value="ECO:0007669"/>
    <property type="project" value="InterPro"/>
</dbReference>
<dbReference type="GO" id="GO:0015288">
    <property type="term" value="F:porin activity"/>
    <property type="evidence" value="ECO:0000318"/>
    <property type="project" value="GO_Central"/>
</dbReference>
<dbReference type="GO" id="GO:0006811">
    <property type="term" value="P:monoatomic ion transport"/>
    <property type="evidence" value="ECO:0007669"/>
    <property type="project" value="UniProtKB-KW"/>
</dbReference>
<dbReference type="GO" id="GO:0015774">
    <property type="term" value="P:polysaccharide transport"/>
    <property type="evidence" value="ECO:0000318"/>
    <property type="project" value="GO_Central"/>
</dbReference>
<dbReference type="CDD" id="cd01346">
    <property type="entry name" value="Maltoporin-like"/>
    <property type="match status" value="1"/>
</dbReference>
<dbReference type="FunFam" id="2.40.170.10:FF:000001">
    <property type="entry name" value="Maltoporin"/>
    <property type="match status" value="1"/>
</dbReference>
<dbReference type="Gene3D" id="2.40.170.10">
    <property type="entry name" value="Porin, LamB type"/>
    <property type="match status" value="1"/>
</dbReference>
<dbReference type="HAMAP" id="MF_01301">
    <property type="entry name" value="LamB"/>
    <property type="match status" value="1"/>
</dbReference>
<dbReference type="InterPro" id="IPR050286">
    <property type="entry name" value="G_neg_Bact_CarbUptk_Porin"/>
</dbReference>
<dbReference type="InterPro" id="IPR023738">
    <property type="entry name" value="Maltoporin"/>
</dbReference>
<dbReference type="InterPro" id="IPR003192">
    <property type="entry name" value="Porin_LamB"/>
</dbReference>
<dbReference type="InterPro" id="IPR036998">
    <property type="entry name" value="Porin_LamB_sf"/>
</dbReference>
<dbReference type="NCBIfam" id="NF006860">
    <property type="entry name" value="PRK09360.1"/>
    <property type="match status" value="1"/>
</dbReference>
<dbReference type="PANTHER" id="PTHR38762">
    <property type="entry name" value="CRYPTIC OUTER MEMBRANE PORIN BGLH-RELATED"/>
    <property type="match status" value="1"/>
</dbReference>
<dbReference type="PANTHER" id="PTHR38762:SF1">
    <property type="entry name" value="CRYPTIC OUTER MEMBRANE PORIN BGLH-RELATED"/>
    <property type="match status" value="1"/>
</dbReference>
<dbReference type="Pfam" id="PF02264">
    <property type="entry name" value="LamB"/>
    <property type="match status" value="1"/>
</dbReference>
<dbReference type="SUPFAM" id="SSF56935">
    <property type="entry name" value="Porins"/>
    <property type="match status" value="1"/>
</dbReference>
<accession>P26466</accession>
<sequence>MMITLRKLPLAVAVAAGVMSAQAMAVDFHGYARSGIGWTGSGGEQQCFQATGAQSKYRLGNECETYAELKLGQEVWKEGDKSFYFDTNVAYSVNQQNDWESTDPAFREANVQGKNLIEWLPGSTIWAGKRFYQRHDVHMIDFYYWDISGPGAGIENIDLGFGKLSLAATRSTEAGGSYTFSSQNIYDEVKDTANDVFDVRLAGLQTNPDGVLELGVDYGRANTTDGYKLADGASKDGWMFTAEHTQSMLKGYNKFVVQYATDAMTTQGKGQARGSDGSSSFTEELSDGTKINYANKVINNNGNMWRILDHGAISLGDKWDLMYVGMYQNIDWDNNLGTEWWTVGVRPMYKWTPIMSTLLEVGYDNVKSQQTGDRNNQYKITLAQQWQAGDSIWSRPAIRIFATYAKWDEKWGYIKDGDNISRYAAATNSGISTNSRGDSDEWTFGAQMEIWW</sequence>
<evidence type="ECO:0000255" key="1">
    <source>
        <dbReference type="HAMAP-Rule" id="MF_01301"/>
    </source>
</evidence>
<evidence type="ECO:0000269" key="2">
    <source>
    </source>
</evidence>
<evidence type="ECO:0000303" key="3">
    <source>
    </source>
</evidence>
<evidence type="ECO:0000305" key="4"/>
<evidence type="ECO:0000305" key="5">
    <source>
    </source>
</evidence>
<evidence type="ECO:0000305" key="6">
    <source>
    </source>
</evidence>
<evidence type="ECO:0007829" key="7">
    <source>
        <dbReference type="PDB" id="2MPR"/>
    </source>
</evidence>
<proteinExistence type="evidence at protein level"/>
<feature type="signal peptide">
    <location>
        <begin position="1"/>
        <end position="25"/>
    </location>
</feature>
<feature type="chain" id="PRO_0000025180" description="Maltoporin">
    <location>
        <begin position="26"/>
        <end position="452"/>
    </location>
</feature>
<feature type="topological domain" description="Periplasmic" evidence="6">
    <location>
        <position position="26"/>
    </location>
</feature>
<feature type="transmembrane region" description="Beta stranded" evidence="6">
    <location>
        <begin position="27"/>
        <end position="35"/>
    </location>
</feature>
<feature type="topological domain" description="Extracellular" evidence="6">
    <location>
        <begin position="36"/>
        <end position="64"/>
    </location>
</feature>
<feature type="transmembrane region" description="Beta stranded" evidence="6">
    <location>
        <begin position="65"/>
        <end position="78"/>
    </location>
</feature>
<feature type="topological domain" description="Periplasmic" evidence="6">
    <location>
        <begin position="79"/>
        <end position="80"/>
    </location>
</feature>
<feature type="transmembrane region" description="Beta stranded" evidence="6">
    <location>
        <begin position="81"/>
        <end position="93"/>
    </location>
</feature>
<feature type="topological domain" description="Extracellular" evidence="6">
    <location>
        <begin position="94"/>
        <end position="104"/>
    </location>
</feature>
<feature type="transmembrane region" description="Beta stranded" evidence="6">
    <location>
        <begin position="105"/>
        <end position="115"/>
    </location>
</feature>
<feature type="topological domain" description="Periplasmic" evidence="6">
    <location>
        <begin position="116"/>
        <end position="122"/>
    </location>
</feature>
<feature type="transmembrane region" description="Beta stranded" evidence="6">
    <location>
        <begin position="123"/>
        <end position="130"/>
    </location>
</feature>
<feature type="topological domain" description="Extracellular" evidence="6">
    <location>
        <begin position="131"/>
        <end position="148"/>
    </location>
</feature>
<feature type="transmembrane region" description="Beta stranded" evidence="6">
    <location>
        <begin position="149"/>
        <end position="159"/>
    </location>
</feature>
<feature type="topological domain" description="Periplasmic" evidence="6">
    <location>
        <begin position="160"/>
        <end position="161"/>
    </location>
</feature>
<feature type="transmembrane region" description="Beta stranded" evidence="6">
    <location>
        <begin position="162"/>
        <end position="173"/>
    </location>
</feature>
<feature type="topological domain" description="Extracellular" evidence="6">
    <location>
        <begin position="174"/>
        <end position="191"/>
    </location>
</feature>
<feature type="transmembrane region" description="Beta stranded" evidence="6">
    <location>
        <begin position="192"/>
        <end position="205"/>
    </location>
</feature>
<feature type="topological domain" description="Periplasmic" evidence="6">
    <location>
        <begin position="206"/>
        <end position="209"/>
    </location>
</feature>
<feature type="transmembrane region" description="Beta stranded" evidence="6">
    <location>
        <begin position="210"/>
        <end position="222"/>
    </location>
</feature>
<feature type="topological domain" description="Extracellular" evidence="6">
    <location>
        <begin position="223"/>
        <end position="234"/>
    </location>
</feature>
<feature type="transmembrane region" description="Beta stranded" evidence="6">
    <location>
        <begin position="235"/>
        <end position="248"/>
    </location>
</feature>
<feature type="topological domain" description="Periplasmic" evidence="6">
    <location>
        <begin position="249"/>
        <end position="250"/>
    </location>
</feature>
<feature type="transmembrane region" description="Beta stranded" evidence="6">
    <location>
        <begin position="251"/>
        <end position="263"/>
    </location>
</feature>
<feature type="topological domain" description="Extracellular" evidence="6">
    <location>
        <begin position="264"/>
        <end position="300"/>
    </location>
</feature>
<feature type="transmembrane region" description="Beta stranded" evidence="6">
    <location>
        <begin position="301"/>
        <end position="315"/>
    </location>
</feature>
<feature type="topological domain" description="Periplasmic" evidence="6">
    <location>
        <begin position="316"/>
        <end position="317"/>
    </location>
</feature>
<feature type="transmembrane region" description="Beta stranded" evidence="6">
    <location>
        <begin position="318"/>
        <end position="333"/>
    </location>
</feature>
<feature type="topological domain" description="Extracellular" evidence="6">
    <location>
        <begin position="334"/>
        <end position="336"/>
    </location>
</feature>
<feature type="transmembrane region" description="Beta stranded" evidence="6">
    <location>
        <begin position="337"/>
        <end position="351"/>
    </location>
</feature>
<feature type="topological domain" description="Periplasmic" evidence="6">
    <location>
        <begin position="352"/>
        <end position="353"/>
    </location>
</feature>
<feature type="transmembrane region" description="Beta stranded" evidence="6">
    <location>
        <begin position="354"/>
        <end position="369"/>
    </location>
</feature>
<feature type="topological domain" description="Extracellular" evidence="6">
    <location>
        <begin position="370"/>
        <end position="372"/>
    </location>
</feature>
<feature type="transmembrane region" description="Beta stranded" evidence="6">
    <location>
        <begin position="373"/>
        <end position="388"/>
    </location>
</feature>
<feature type="topological domain" description="Periplasmic" evidence="6">
    <location>
        <begin position="389"/>
        <end position="395"/>
    </location>
</feature>
<feature type="transmembrane region" description="Beta stranded" evidence="6">
    <location>
        <begin position="396"/>
        <end position="410"/>
    </location>
</feature>
<feature type="topological domain" description="Extracellular" evidence="6">
    <location>
        <begin position="411"/>
        <end position="436"/>
    </location>
</feature>
<feature type="transmembrane region" description="Beta stranded" evidence="6">
    <location>
        <begin position="437"/>
        <end position="451"/>
    </location>
</feature>
<feature type="topological domain" description="Periplasmic" evidence="6">
    <location>
        <position position="452"/>
    </location>
</feature>
<feature type="binding site" evidence="2">
    <location>
        <begin position="134"/>
        <end position="143"/>
    </location>
    <ligand>
        <name>substrate</name>
    </ligand>
</feature>
<feature type="site" description="Greasy slide, important in sugar transport" evidence="2">
    <location>
        <position position="31"/>
    </location>
</feature>
<feature type="site" description="Greasy slide, important in sugar transport" evidence="2">
    <location>
        <position position="66"/>
    </location>
</feature>
<feature type="site" description="Greasy slide, important in sugar transport" evidence="2">
    <location>
        <position position="99"/>
    </location>
</feature>
<feature type="site" description="Important in sugar transport" evidence="2">
    <location>
        <position position="143"/>
    </location>
</feature>
<feature type="site" description="Greasy slide, important in sugar transport" evidence="2">
    <location>
        <position position="252"/>
    </location>
</feature>
<feature type="site" description="Greasy slide, important in sugar transport" evidence="2">
    <location>
        <position position="393"/>
    </location>
</feature>
<feature type="site" description="Greasy slide, important in sugar transport" evidence="2">
    <location>
        <position position="451"/>
    </location>
</feature>
<feature type="disulfide bond" evidence="2">
    <location>
        <begin position="47"/>
        <end position="63"/>
    </location>
</feature>
<feature type="strand" evidence="7">
    <location>
        <begin position="27"/>
        <end position="39"/>
    </location>
</feature>
<feature type="strand" evidence="7">
    <location>
        <begin position="42"/>
        <end position="44"/>
    </location>
</feature>
<feature type="strand" evidence="7">
    <location>
        <begin position="64"/>
        <end position="78"/>
    </location>
</feature>
<feature type="strand" evidence="7">
    <location>
        <begin position="81"/>
        <end position="93"/>
    </location>
</feature>
<feature type="strand" evidence="7">
    <location>
        <begin position="96"/>
        <end position="98"/>
    </location>
</feature>
<feature type="strand" evidence="7">
    <location>
        <begin position="105"/>
        <end position="115"/>
    </location>
</feature>
<feature type="strand" evidence="7">
    <location>
        <begin position="124"/>
        <end position="130"/>
    </location>
</feature>
<feature type="strand" evidence="7">
    <location>
        <begin position="135"/>
        <end position="137"/>
    </location>
</feature>
<feature type="helix" evidence="7">
    <location>
        <begin position="138"/>
        <end position="140"/>
    </location>
</feature>
<feature type="strand" evidence="7">
    <location>
        <begin position="142"/>
        <end position="145"/>
    </location>
</feature>
<feature type="strand" evidence="7">
    <location>
        <begin position="149"/>
        <end position="158"/>
    </location>
</feature>
<feature type="strand" evidence="7">
    <location>
        <begin position="160"/>
        <end position="182"/>
    </location>
</feature>
<feature type="strand" evidence="7">
    <location>
        <begin position="185"/>
        <end position="207"/>
    </location>
</feature>
<feature type="strand" evidence="7">
    <location>
        <begin position="210"/>
        <end position="222"/>
    </location>
</feature>
<feature type="strand" evidence="7">
    <location>
        <begin position="236"/>
        <end position="248"/>
    </location>
</feature>
<feature type="strand" evidence="7">
    <location>
        <begin position="251"/>
        <end position="261"/>
    </location>
</feature>
<feature type="helix" evidence="7">
    <location>
        <begin position="262"/>
        <end position="264"/>
    </location>
</feature>
<feature type="turn" evidence="7">
    <location>
        <begin position="265"/>
        <end position="267"/>
    </location>
</feature>
<feature type="turn" evidence="7">
    <location>
        <begin position="274"/>
        <end position="277"/>
    </location>
</feature>
<feature type="strand" evidence="7">
    <location>
        <begin position="280"/>
        <end position="282"/>
    </location>
</feature>
<feature type="strand" evidence="7">
    <location>
        <begin position="292"/>
        <end position="294"/>
    </location>
</feature>
<feature type="strand" evidence="7">
    <location>
        <begin position="302"/>
        <end position="315"/>
    </location>
</feature>
<feature type="turn" evidence="7">
    <location>
        <begin position="316"/>
        <end position="318"/>
    </location>
</feature>
<feature type="strand" evidence="7">
    <location>
        <begin position="319"/>
        <end position="332"/>
    </location>
</feature>
<feature type="strand" evidence="7">
    <location>
        <begin position="338"/>
        <end position="352"/>
    </location>
</feature>
<feature type="strand" evidence="7">
    <location>
        <begin position="355"/>
        <end position="368"/>
    </location>
</feature>
<feature type="turn" evidence="7">
    <location>
        <begin position="369"/>
        <end position="371"/>
    </location>
</feature>
<feature type="strand" evidence="7">
    <location>
        <begin position="374"/>
        <end position="391"/>
    </location>
</feature>
<feature type="strand" evidence="7">
    <location>
        <begin position="396"/>
        <end position="416"/>
    </location>
</feature>
<feature type="strand" evidence="7">
    <location>
        <begin position="419"/>
        <end position="431"/>
    </location>
</feature>
<feature type="strand" evidence="7">
    <location>
        <begin position="438"/>
        <end position="451"/>
    </location>
</feature>
<reference key="1">
    <citation type="journal article" date="1992" name="Biochim. Biophys. Acta">
        <title>Completion of the nucleotide sequence of the 'maltose B' region in Salmonella typhimurium: the high conservation of the malM gene suggests a selected physiological role for its product.</title>
        <authorList>
            <person name="Schneider E."/>
            <person name="Francoz E."/>
            <person name="Dassa E."/>
        </authorList>
    </citation>
    <scope>NUCLEOTIDE SEQUENCE [GENOMIC DNA]</scope>
    <source>
        <strain>LT2</strain>
    </source>
</reference>
<reference key="2">
    <citation type="journal article" date="1990" name="Res. Microbiol.">
        <title>The maltoporin of Salmonella typhimurium: sequence and folding model.</title>
        <authorList>
            <person name="Francoz E."/>
            <person name="Molla A."/>
            <person name="Dassa E."/>
            <person name="Saurin W."/>
            <person name="Hofnung M."/>
        </authorList>
    </citation>
    <scope>NUCLEOTIDE SEQUENCE [GENOMIC DNA]</scope>
    <scope>FUNCTION</scope>
    <source>
        <strain>LT2</strain>
    </source>
</reference>
<reference key="3">
    <citation type="submission" date="1996-11" db="EMBL/GenBank/DDBJ databases">
        <authorList>
            <person name="Dassa E."/>
        </authorList>
    </citation>
    <scope>SEQUENCE REVISION TO 427</scope>
</reference>
<reference key="4">
    <citation type="journal article" date="2001" name="Nature">
        <title>Complete genome sequence of Salmonella enterica serovar Typhimurium LT2.</title>
        <authorList>
            <person name="McClelland M."/>
            <person name="Sanderson K.E."/>
            <person name="Spieth J."/>
            <person name="Clifton S.W."/>
            <person name="Latreille P."/>
            <person name="Courtney L."/>
            <person name="Porwollik S."/>
            <person name="Ali J."/>
            <person name="Dante M."/>
            <person name="Du F."/>
            <person name="Hou S."/>
            <person name="Layman D."/>
            <person name="Leonard S."/>
            <person name="Nguyen C."/>
            <person name="Scott K."/>
            <person name="Holmes A."/>
            <person name="Grewal N."/>
            <person name="Mulvaney E."/>
            <person name="Ryan E."/>
            <person name="Sun H."/>
            <person name="Florea L."/>
            <person name="Miller W."/>
            <person name="Stoneking T."/>
            <person name="Nhan M."/>
            <person name="Waterston R."/>
            <person name="Wilson R.K."/>
        </authorList>
    </citation>
    <scope>NUCLEOTIDE SEQUENCE [LARGE SCALE GENOMIC DNA]</scope>
    <source>
        <strain>LT2 / SGSC1412 / ATCC 700720</strain>
    </source>
</reference>
<reference key="5">
    <citation type="journal article" date="1997" name="J. Mol. Biol.">
        <title>Structure of maltoporin from Salmonella typhimurium ligated with a nitrophenyl-maltotrioside.</title>
        <authorList>
            <person name="Meyer J.E.W."/>
            <person name="Hofnung M."/>
            <person name="Schulz G.E."/>
        </authorList>
    </citation>
    <scope>X-RAY CRYSTALLOGRAPHY (2.4 ANGSTROMS) OF 26-452 WITH AND WITHOUT SUBSTRATE</scope>
    <scope>SUBUNIT</scope>
    <scope>TOPOLOGY</scope>
    <scope>DISULFIDE BOND</scope>
</reference>
<keyword id="KW-0002">3D-structure</keyword>
<keyword id="KW-0998">Cell outer membrane</keyword>
<keyword id="KW-1015">Disulfide bond</keyword>
<keyword id="KW-0406">Ion transport</keyword>
<keyword id="KW-0472">Membrane</keyword>
<keyword id="KW-0626">Porin</keyword>
<keyword id="KW-1185">Reference proteome</keyword>
<keyword id="KW-0732">Signal</keyword>
<keyword id="KW-0762">Sugar transport</keyword>
<keyword id="KW-0812">Transmembrane</keyword>
<keyword id="KW-1134">Transmembrane beta strand</keyword>
<keyword id="KW-0813">Transport</keyword>
<name>LAMB_SALTY</name>